<proteinExistence type="evidence at protein level"/>
<organism>
    <name type="scientific">Limnospira maxima</name>
    <name type="common">Arthrospira maxima</name>
    <dbReference type="NCBI Taxonomy" id="129910"/>
    <lineage>
        <taxon>Bacteria</taxon>
        <taxon>Bacillati</taxon>
        <taxon>Cyanobacteriota</taxon>
        <taxon>Cyanophyceae</taxon>
        <taxon>Oscillatoriophycideae</taxon>
        <taxon>Oscillatoriales</taxon>
        <taxon>Sirenicapillariaceae</taxon>
        <taxon>Limnospira</taxon>
    </lineage>
</organism>
<sequence>MATYKVTLISEAEGINETIDCDDDTYILDAAEEAGLDLPYSCRAGACSTCAGKITSGSIDQSDQSFLDDDQIEAGYVLTCVAYPTSDCTIQTHQEEGLY</sequence>
<keyword id="KW-0001">2Fe-2S</keyword>
<keyword id="KW-0903">Direct protein sequencing</keyword>
<keyword id="KW-0249">Electron transport</keyword>
<keyword id="KW-0408">Iron</keyword>
<keyword id="KW-0411">Iron-sulfur</keyword>
<keyword id="KW-0479">Metal-binding</keyword>
<keyword id="KW-0813">Transport</keyword>
<accession>P00245</accession>
<comment type="function">
    <text>Ferredoxins are iron-sulfur proteins that transfer electrons in a wide variety of metabolic reactions.</text>
</comment>
<comment type="cofactor">
    <cofactor>
        <name>[2Fe-2S] cluster</name>
        <dbReference type="ChEBI" id="CHEBI:190135"/>
    </cofactor>
    <text>Binds 1 [2Fe-2S] cluster.</text>
</comment>
<comment type="similarity">
    <text evidence="3">Belongs to the 2Fe2S plant-type ferredoxin family.</text>
</comment>
<feature type="initiator methionine" description="Removed" evidence="2">
    <location>
        <position position="1"/>
    </location>
</feature>
<feature type="chain" id="PRO_0000189369" description="Ferredoxin">
    <location>
        <begin position="2"/>
        <end position="99"/>
    </location>
</feature>
<feature type="domain" description="2Fe-2S ferredoxin-type" evidence="1">
    <location>
        <begin position="4"/>
        <end position="96"/>
    </location>
</feature>
<feature type="binding site" evidence="1">
    <location>
        <position position="42"/>
    </location>
    <ligand>
        <name>[2Fe-2S] cluster</name>
        <dbReference type="ChEBI" id="CHEBI:190135"/>
    </ligand>
</feature>
<feature type="binding site" evidence="1">
    <location>
        <position position="47"/>
    </location>
    <ligand>
        <name>[2Fe-2S] cluster</name>
        <dbReference type="ChEBI" id="CHEBI:190135"/>
    </ligand>
</feature>
<feature type="binding site" evidence="1">
    <location>
        <position position="50"/>
    </location>
    <ligand>
        <name>[2Fe-2S] cluster</name>
        <dbReference type="ChEBI" id="CHEBI:190135"/>
    </ligand>
</feature>
<feature type="binding site" evidence="1">
    <location>
        <position position="80"/>
    </location>
    <ligand>
        <name>[2Fe-2S] cluster</name>
        <dbReference type="ChEBI" id="CHEBI:190135"/>
    </ligand>
</feature>
<evidence type="ECO:0000255" key="1">
    <source>
        <dbReference type="PROSITE-ProRule" id="PRU00465"/>
    </source>
</evidence>
<evidence type="ECO:0000269" key="2">
    <source>
    </source>
</evidence>
<evidence type="ECO:0000305" key="3"/>
<name>FER_LIMMA</name>
<dbReference type="PIR" id="A00249">
    <property type="entry name" value="FESG"/>
</dbReference>
<dbReference type="SMR" id="P00245"/>
<dbReference type="GO" id="GO:0051537">
    <property type="term" value="F:2 iron, 2 sulfur cluster binding"/>
    <property type="evidence" value="ECO:0007669"/>
    <property type="project" value="UniProtKB-KW"/>
</dbReference>
<dbReference type="GO" id="GO:0009055">
    <property type="term" value="F:electron transfer activity"/>
    <property type="evidence" value="ECO:0007669"/>
    <property type="project" value="InterPro"/>
</dbReference>
<dbReference type="GO" id="GO:0046872">
    <property type="term" value="F:metal ion binding"/>
    <property type="evidence" value="ECO:0007669"/>
    <property type="project" value="UniProtKB-KW"/>
</dbReference>
<dbReference type="GO" id="GO:0022900">
    <property type="term" value="P:electron transport chain"/>
    <property type="evidence" value="ECO:0007669"/>
    <property type="project" value="InterPro"/>
</dbReference>
<dbReference type="CDD" id="cd00207">
    <property type="entry name" value="fer2"/>
    <property type="match status" value="1"/>
</dbReference>
<dbReference type="FunFam" id="3.10.20.30:FF:000014">
    <property type="entry name" value="Ferredoxin"/>
    <property type="match status" value="1"/>
</dbReference>
<dbReference type="Gene3D" id="3.10.20.30">
    <property type="match status" value="1"/>
</dbReference>
<dbReference type="InterPro" id="IPR036010">
    <property type="entry name" value="2Fe-2S_ferredoxin-like_sf"/>
</dbReference>
<dbReference type="InterPro" id="IPR001041">
    <property type="entry name" value="2Fe-2S_ferredoxin-type"/>
</dbReference>
<dbReference type="InterPro" id="IPR006058">
    <property type="entry name" value="2Fe2S_fd_BS"/>
</dbReference>
<dbReference type="InterPro" id="IPR012675">
    <property type="entry name" value="Beta-grasp_dom_sf"/>
</dbReference>
<dbReference type="InterPro" id="IPR010241">
    <property type="entry name" value="Fd_pln"/>
</dbReference>
<dbReference type="NCBIfam" id="TIGR02008">
    <property type="entry name" value="fdx_plant"/>
    <property type="match status" value="1"/>
</dbReference>
<dbReference type="PANTHER" id="PTHR43112">
    <property type="entry name" value="FERREDOXIN"/>
    <property type="match status" value="1"/>
</dbReference>
<dbReference type="PANTHER" id="PTHR43112:SF3">
    <property type="entry name" value="FERREDOXIN-2, CHLOROPLASTIC"/>
    <property type="match status" value="1"/>
</dbReference>
<dbReference type="Pfam" id="PF00111">
    <property type="entry name" value="Fer2"/>
    <property type="match status" value="1"/>
</dbReference>
<dbReference type="SUPFAM" id="SSF54292">
    <property type="entry name" value="2Fe-2S ferredoxin-like"/>
    <property type="match status" value="1"/>
</dbReference>
<dbReference type="PROSITE" id="PS00197">
    <property type="entry name" value="2FE2S_FER_1"/>
    <property type="match status" value="1"/>
</dbReference>
<dbReference type="PROSITE" id="PS51085">
    <property type="entry name" value="2FE2S_FER_2"/>
    <property type="match status" value="1"/>
</dbReference>
<protein>
    <recommendedName>
        <fullName>Ferredoxin</fullName>
    </recommendedName>
</protein>
<reference key="1">
    <citation type="journal article" date="1975" name="Biochemistry">
        <title>Modification of the automated sequence determination as applied to the sequence determination of the Spirulina maxima ferredoxin.</title>
        <authorList>
            <person name="Tanaka M."/>
            <person name="Haniu M."/>
            <person name="Yasunobu K.T."/>
            <person name="Rao K.K."/>
            <person name="Hall D.O."/>
        </authorList>
    </citation>
    <scope>PROTEIN SEQUENCE OF 2-99</scope>
</reference>